<accession>Q91ZS8</accession>
<accession>C3TTQ1</accession>
<accession>Q3UHM7</accession>
<accession>Q8K3X1</accession>
<accession>Q91ZS6</accession>
<accession>Q91ZS7</accession>
<accession>Q91ZS9</accession>
<accession>Q99MU8</accession>
<evidence type="ECO:0000250" key="1">
    <source>
        <dbReference type="UniProtKB" id="P51400"/>
    </source>
</evidence>
<evidence type="ECO:0000250" key="2">
    <source>
        <dbReference type="UniProtKB" id="P78563"/>
    </source>
</evidence>
<evidence type="ECO:0000255" key="3">
    <source>
        <dbReference type="PROSITE-ProRule" id="PRU00240"/>
    </source>
</evidence>
<evidence type="ECO:0000255" key="4">
    <source>
        <dbReference type="PROSITE-ProRule" id="PRU00266"/>
    </source>
</evidence>
<evidence type="ECO:0000256" key="5">
    <source>
        <dbReference type="SAM" id="MobiDB-lite"/>
    </source>
</evidence>
<evidence type="ECO:0000269" key="6">
    <source>
    </source>
</evidence>
<evidence type="ECO:0000269" key="7">
    <source>
    </source>
</evidence>
<evidence type="ECO:0000303" key="8">
    <source>
    </source>
</evidence>
<evidence type="ECO:0000303" key="9">
    <source>
    </source>
</evidence>
<evidence type="ECO:0000303" key="10">
    <source ref="1"/>
</evidence>
<evidence type="ECO:0000305" key="11"/>
<evidence type="ECO:0007829" key="12">
    <source>
        <dbReference type="PDB" id="2L2K"/>
    </source>
</evidence>
<dbReference type="EC" id="3.5.4.37" evidence="7"/>
<dbReference type="EMBL" id="AF403106">
    <property type="protein sequence ID" value="AAL01301.1"/>
    <property type="molecule type" value="mRNA"/>
</dbReference>
<dbReference type="EMBL" id="AF403107">
    <property type="protein sequence ID" value="AAL01302.1"/>
    <property type="molecule type" value="mRNA"/>
</dbReference>
<dbReference type="EMBL" id="AF403108">
    <property type="protein sequence ID" value="AAL01303.1"/>
    <property type="molecule type" value="mRNA"/>
</dbReference>
<dbReference type="EMBL" id="AF403109">
    <property type="protein sequence ID" value="AAL01304.1"/>
    <property type="molecule type" value="mRNA"/>
</dbReference>
<dbReference type="EMBL" id="AF525421">
    <property type="protein sequence ID" value="AAM83099.1"/>
    <property type="molecule type" value="mRNA"/>
</dbReference>
<dbReference type="EMBL" id="AY162454">
    <property type="protein sequence ID" value="AAN86546.1"/>
    <property type="molecule type" value="mRNA"/>
</dbReference>
<dbReference type="EMBL" id="AF291049">
    <property type="protein sequence ID" value="AAK17102.1"/>
    <property type="molecule type" value="mRNA"/>
</dbReference>
<dbReference type="EMBL" id="FJ169505">
    <property type="protein sequence ID" value="ACN49026.1"/>
    <property type="molecule type" value="mRNA"/>
</dbReference>
<dbReference type="EMBL" id="AK141777">
    <property type="protein sequence ID" value="BAE24831.1"/>
    <property type="molecule type" value="mRNA"/>
</dbReference>
<dbReference type="EMBL" id="AK147298">
    <property type="protein sequence ID" value="BAE27830.1"/>
    <property type="molecule type" value="mRNA"/>
</dbReference>
<dbReference type="EMBL" id="CH466553">
    <property type="protein sequence ID" value="EDL31813.1"/>
    <property type="molecule type" value="Genomic_DNA"/>
</dbReference>
<dbReference type="CCDS" id="CCDS35948.1">
    <molecule id="Q91ZS8-1"/>
</dbReference>
<dbReference type="CCDS" id="CCDS35949.1">
    <molecule id="Q91ZS8-2"/>
</dbReference>
<dbReference type="RefSeq" id="NP_001020008.1">
    <molecule id="Q91ZS8-1"/>
    <property type="nucleotide sequence ID" value="NM_001024837.2"/>
</dbReference>
<dbReference type="RefSeq" id="NP_001020009.1">
    <molecule id="Q91ZS8-3"/>
    <property type="nucleotide sequence ID" value="NM_001024838.2"/>
</dbReference>
<dbReference type="RefSeq" id="NP_570965.2">
    <molecule id="Q91ZS8-2"/>
    <property type="nucleotide sequence ID" value="NM_130895.3"/>
</dbReference>
<dbReference type="RefSeq" id="XP_006513128.1">
    <property type="nucleotide sequence ID" value="XM_006513065.1"/>
</dbReference>
<dbReference type="RefSeq" id="XP_030100683.1">
    <molecule id="Q91ZS8-1"/>
    <property type="nucleotide sequence ID" value="XM_030244823.2"/>
</dbReference>
<dbReference type="RefSeq" id="XP_036011393.1">
    <molecule id="Q91ZS8-1"/>
    <property type="nucleotide sequence ID" value="XM_036155500.1"/>
</dbReference>
<dbReference type="RefSeq" id="XP_036011394.1">
    <molecule id="Q91ZS8-1"/>
    <property type="nucleotide sequence ID" value="XM_036155501.1"/>
</dbReference>
<dbReference type="RefSeq" id="XP_036011395.1">
    <molecule id="Q91ZS8-1"/>
    <property type="nucleotide sequence ID" value="XM_036155502.1"/>
</dbReference>
<dbReference type="PDB" id="2L2K">
    <property type="method" value="NMR"/>
    <property type="chains" value="B=231-301"/>
</dbReference>
<dbReference type="PDBsum" id="2L2K"/>
<dbReference type="BMRB" id="Q91ZS8"/>
<dbReference type="SMR" id="Q91ZS8"/>
<dbReference type="BioGRID" id="225680">
    <property type="interactions" value="1"/>
</dbReference>
<dbReference type="FunCoup" id="Q91ZS8">
    <property type="interactions" value="4128"/>
</dbReference>
<dbReference type="STRING" id="10090.ENSMUSP00000101046"/>
<dbReference type="GlyGen" id="Q91ZS8">
    <property type="glycosylation" value="2 sites, 1 N-linked glycan (1 site)"/>
</dbReference>
<dbReference type="iPTMnet" id="Q91ZS8"/>
<dbReference type="PhosphoSitePlus" id="Q91ZS8"/>
<dbReference type="PaxDb" id="10090-ENSMUSP00000095976"/>
<dbReference type="PeptideAtlas" id="Q91ZS8"/>
<dbReference type="ProteomicsDB" id="253195">
    <molecule id="Q91ZS8-1"/>
</dbReference>
<dbReference type="ProteomicsDB" id="253196">
    <molecule id="Q91ZS8-2"/>
</dbReference>
<dbReference type="ProteomicsDB" id="253197">
    <molecule id="Q91ZS8-3"/>
</dbReference>
<dbReference type="ProteomicsDB" id="253198">
    <molecule id="Q91ZS8-4"/>
</dbReference>
<dbReference type="ProteomicsDB" id="253199">
    <molecule id="Q91ZS8-5"/>
</dbReference>
<dbReference type="ProteomicsDB" id="253200">
    <molecule id="Q91ZS8-6"/>
</dbReference>
<dbReference type="Pumba" id="Q91ZS8"/>
<dbReference type="Antibodypedia" id="10404">
    <property type="antibodies" value="144 antibodies from 29 providers"/>
</dbReference>
<dbReference type="DNASU" id="110532"/>
<dbReference type="Ensembl" id="ENSMUST00000020496.14">
    <molecule id="Q91ZS8-2"/>
    <property type="protein sequence ID" value="ENSMUSP00000020496.8"/>
    <property type="gene ID" value="ENSMUSG00000020262.16"/>
</dbReference>
<dbReference type="Ensembl" id="ENSMUST00000098374.9">
    <molecule id="Q91ZS8-1"/>
    <property type="protein sequence ID" value="ENSMUSP00000095976.3"/>
    <property type="gene ID" value="ENSMUSG00000020262.16"/>
</dbReference>
<dbReference type="Ensembl" id="ENSMUST00000105406.8">
    <molecule id="Q91ZS8-1"/>
    <property type="protein sequence ID" value="ENSMUSP00000101046.2"/>
    <property type="gene ID" value="ENSMUSG00000020262.16"/>
</dbReference>
<dbReference type="GeneID" id="110532"/>
<dbReference type="KEGG" id="mmu:110532"/>
<dbReference type="UCSC" id="uc007fvl.2">
    <molecule id="Q91ZS8-3"/>
    <property type="organism name" value="mouse"/>
</dbReference>
<dbReference type="UCSC" id="uc007fvm.2">
    <molecule id="Q91ZS8-1"/>
    <property type="organism name" value="mouse"/>
</dbReference>
<dbReference type="UCSC" id="uc007fvn.2">
    <molecule id="Q91ZS8-5"/>
    <property type="organism name" value="mouse"/>
</dbReference>
<dbReference type="UCSC" id="uc007fvp.2">
    <molecule id="Q91ZS8-2"/>
    <property type="organism name" value="mouse"/>
</dbReference>
<dbReference type="AGR" id="MGI:891999"/>
<dbReference type="CTD" id="104"/>
<dbReference type="MGI" id="MGI:891999">
    <property type="gene designation" value="Adarb1"/>
</dbReference>
<dbReference type="VEuPathDB" id="HostDB:ENSMUSG00000020262"/>
<dbReference type="eggNOG" id="KOG2777">
    <property type="taxonomic scope" value="Eukaryota"/>
</dbReference>
<dbReference type="GeneTree" id="ENSGT00940000155992"/>
<dbReference type="HOGENOM" id="CLU_005382_3_1_1"/>
<dbReference type="InParanoid" id="Q91ZS8"/>
<dbReference type="OMA" id="IFSPHES"/>
<dbReference type="PhylomeDB" id="Q91ZS8"/>
<dbReference type="TreeFam" id="TF315806"/>
<dbReference type="Reactome" id="R-MMU-75102">
    <property type="pathway name" value="C6 deamination of adenosine"/>
</dbReference>
<dbReference type="Reactome" id="R-MMU-77042">
    <property type="pathway name" value="Formation of editosomes by ADAR proteins"/>
</dbReference>
<dbReference type="BioGRID-ORCS" id="110532">
    <property type="hits" value="3 hits in 74 CRISPR screens"/>
</dbReference>
<dbReference type="ChiTaRS" id="Adarb1">
    <property type="organism name" value="mouse"/>
</dbReference>
<dbReference type="EvolutionaryTrace" id="Q91ZS8"/>
<dbReference type="PRO" id="PR:Q91ZS8"/>
<dbReference type="Proteomes" id="UP000000589">
    <property type="component" value="Chromosome 10"/>
</dbReference>
<dbReference type="RNAct" id="Q91ZS8">
    <property type="molecule type" value="protein"/>
</dbReference>
<dbReference type="Bgee" id="ENSMUSG00000020262">
    <property type="expression patterns" value="Expressed in medial dorsal nucleus of thalamus and 217 other cell types or tissues"/>
</dbReference>
<dbReference type="ExpressionAtlas" id="Q91ZS8">
    <property type="expression patterns" value="baseline and differential"/>
</dbReference>
<dbReference type="GO" id="GO:0005829">
    <property type="term" value="C:cytosol"/>
    <property type="evidence" value="ECO:0007669"/>
    <property type="project" value="Ensembl"/>
</dbReference>
<dbReference type="GO" id="GO:0005730">
    <property type="term" value="C:nucleolus"/>
    <property type="evidence" value="ECO:0000250"/>
    <property type="project" value="UniProtKB"/>
</dbReference>
<dbReference type="GO" id="GO:0005654">
    <property type="term" value="C:nucleoplasm"/>
    <property type="evidence" value="ECO:0007669"/>
    <property type="project" value="Ensembl"/>
</dbReference>
<dbReference type="GO" id="GO:0005634">
    <property type="term" value="C:nucleus"/>
    <property type="evidence" value="ECO:0000314"/>
    <property type="project" value="MGI"/>
</dbReference>
<dbReference type="GO" id="GO:0045202">
    <property type="term" value="C:synapse"/>
    <property type="evidence" value="ECO:0007669"/>
    <property type="project" value="GOC"/>
</dbReference>
<dbReference type="GO" id="GO:0004000">
    <property type="term" value="F:adenosine deaminase activity"/>
    <property type="evidence" value="ECO:0000314"/>
    <property type="project" value="UniProtKB"/>
</dbReference>
<dbReference type="GO" id="GO:0003726">
    <property type="term" value="F:double-stranded RNA adenosine deaminase activity"/>
    <property type="evidence" value="ECO:0000250"/>
    <property type="project" value="HGNC-UCL"/>
</dbReference>
<dbReference type="GO" id="GO:0003725">
    <property type="term" value="F:double-stranded RNA binding"/>
    <property type="evidence" value="ECO:0000250"/>
    <property type="project" value="HGNC-UCL"/>
</dbReference>
<dbReference type="GO" id="GO:0046872">
    <property type="term" value="F:metal ion binding"/>
    <property type="evidence" value="ECO:0007669"/>
    <property type="project" value="UniProtKB-KW"/>
</dbReference>
<dbReference type="GO" id="GO:0003723">
    <property type="term" value="F:RNA binding"/>
    <property type="evidence" value="ECO:0000250"/>
    <property type="project" value="HGNC-UCL"/>
</dbReference>
<dbReference type="GO" id="GO:0006382">
    <property type="term" value="P:adenosine to inosine editing"/>
    <property type="evidence" value="ECO:0000314"/>
    <property type="project" value="UniProtKB"/>
</dbReference>
<dbReference type="GO" id="GO:0021610">
    <property type="term" value="P:facial nerve morphogenesis"/>
    <property type="evidence" value="ECO:0000315"/>
    <property type="project" value="MGI"/>
</dbReference>
<dbReference type="GO" id="GO:0021618">
    <property type="term" value="P:hypoglossal nerve morphogenesis"/>
    <property type="evidence" value="ECO:0000315"/>
    <property type="project" value="MGI"/>
</dbReference>
<dbReference type="GO" id="GO:0060384">
    <property type="term" value="P:innervation"/>
    <property type="evidence" value="ECO:0000315"/>
    <property type="project" value="MGI"/>
</dbReference>
<dbReference type="GO" id="GO:0061744">
    <property type="term" value="P:motor behavior"/>
    <property type="evidence" value="ECO:0000315"/>
    <property type="project" value="MGI"/>
</dbReference>
<dbReference type="GO" id="GO:0097049">
    <property type="term" value="P:motor neuron apoptotic process"/>
    <property type="evidence" value="ECO:0000315"/>
    <property type="project" value="MGI"/>
</dbReference>
<dbReference type="GO" id="GO:0006397">
    <property type="term" value="P:mRNA processing"/>
    <property type="evidence" value="ECO:0000314"/>
    <property type="project" value="UniProtKB"/>
</dbReference>
<dbReference type="GO" id="GO:0035264">
    <property type="term" value="P:multicellular organism growth"/>
    <property type="evidence" value="ECO:0000315"/>
    <property type="project" value="MGI"/>
</dbReference>
<dbReference type="GO" id="GO:0060415">
    <property type="term" value="P:muscle tissue morphogenesis"/>
    <property type="evidence" value="ECO:0000315"/>
    <property type="project" value="MGI"/>
</dbReference>
<dbReference type="GO" id="GO:0030336">
    <property type="term" value="P:negative regulation of cell migration"/>
    <property type="evidence" value="ECO:0000250"/>
    <property type="project" value="UniProtKB"/>
</dbReference>
<dbReference type="GO" id="GO:0008285">
    <property type="term" value="P:negative regulation of cell population proliferation"/>
    <property type="evidence" value="ECO:0000250"/>
    <property type="project" value="UniProtKB"/>
</dbReference>
<dbReference type="GO" id="GO:0044387">
    <property type="term" value="P:negative regulation of protein kinase activity by regulation of protein phosphorylation"/>
    <property type="evidence" value="ECO:0000250"/>
    <property type="project" value="UniProtKB"/>
</dbReference>
<dbReference type="GO" id="GO:0050884">
    <property type="term" value="P:neuromuscular process controlling posture"/>
    <property type="evidence" value="ECO:0000315"/>
    <property type="project" value="MGI"/>
</dbReference>
<dbReference type="GO" id="GO:0007274">
    <property type="term" value="P:neuromuscular synaptic transmission"/>
    <property type="evidence" value="ECO:0000315"/>
    <property type="project" value="MGI"/>
</dbReference>
<dbReference type="GO" id="GO:0045070">
    <property type="term" value="P:positive regulation of viral genome replication"/>
    <property type="evidence" value="ECO:0000250"/>
    <property type="project" value="UniProtKB"/>
</dbReference>
<dbReference type="GO" id="GO:0051726">
    <property type="term" value="P:regulation of cell cycle"/>
    <property type="evidence" value="ECO:0000250"/>
    <property type="project" value="UniProtKB"/>
</dbReference>
<dbReference type="GO" id="GO:0006396">
    <property type="term" value="P:RNA processing"/>
    <property type="evidence" value="ECO:0000250"/>
    <property type="project" value="HGNC-UCL"/>
</dbReference>
<dbReference type="GO" id="GO:0021965">
    <property type="term" value="P:spinal cord ventral commissure morphogenesis"/>
    <property type="evidence" value="ECO:0000315"/>
    <property type="project" value="MGI"/>
</dbReference>
<dbReference type="CDD" id="cd19895">
    <property type="entry name" value="DSRM_RED1_rpt1"/>
    <property type="match status" value="1"/>
</dbReference>
<dbReference type="CDD" id="cd19898">
    <property type="entry name" value="DSRM_RED1_rpt2"/>
    <property type="match status" value="1"/>
</dbReference>
<dbReference type="FunFam" id="3.30.160.20:FF:000009">
    <property type="entry name" value="Adenosine deaminase RNA-specific B2 (inactive)"/>
    <property type="match status" value="1"/>
</dbReference>
<dbReference type="FunFam" id="3.30.160.20:FF:000011">
    <property type="entry name" value="double-stranded RNA-specific editase 1 isoform X1"/>
    <property type="match status" value="1"/>
</dbReference>
<dbReference type="Gene3D" id="3.30.160.20">
    <property type="match status" value="2"/>
</dbReference>
<dbReference type="InterPro" id="IPR002466">
    <property type="entry name" value="A_deamin"/>
</dbReference>
<dbReference type="InterPro" id="IPR044458">
    <property type="entry name" value="ADAR2_DSRM_1"/>
</dbReference>
<dbReference type="InterPro" id="IPR044459">
    <property type="entry name" value="ADAR2_DSRM_2"/>
</dbReference>
<dbReference type="InterPro" id="IPR014720">
    <property type="entry name" value="dsRBD_dom"/>
</dbReference>
<dbReference type="PANTHER" id="PTHR10910:SF58">
    <property type="entry name" value="DOUBLE-STRANDED RNA-SPECIFIC EDITASE 1"/>
    <property type="match status" value="1"/>
</dbReference>
<dbReference type="PANTHER" id="PTHR10910">
    <property type="entry name" value="EUKARYOTE SPECIFIC DSRNA BINDING PROTEIN"/>
    <property type="match status" value="1"/>
</dbReference>
<dbReference type="Pfam" id="PF02137">
    <property type="entry name" value="A_deamin"/>
    <property type="match status" value="1"/>
</dbReference>
<dbReference type="Pfam" id="PF00035">
    <property type="entry name" value="dsrm"/>
    <property type="match status" value="2"/>
</dbReference>
<dbReference type="SMART" id="SM00552">
    <property type="entry name" value="ADEAMc"/>
    <property type="match status" value="1"/>
</dbReference>
<dbReference type="SMART" id="SM00358">
    <property type="entry name" value="DSRM"/>
    <property type="match status" value="2"/>
</dbReference>
<dbReference type="SUPFAM" id="SSF54768">
    <property type="entry name" value="dsRNA-binding domain-like"/>
    <property type="match status" value="2"/>
</dbReference>
<dbReference type="PROSITE" id="PS50141">
    <property type="entry name" value="A_DEAMIN_EDITASE"/>
    <property type="match status" value="1"/>
</dbReference>
<dbReference type="PROSITE" id="PS50137">
    <property type="entry name" value="DS_RBD"/>
    <property type="match status" value="2"/>
</dbReference>
<feature type="chain" id="PRO_0000171780" description="Double-stranded RNA-specific editase 1">
    <location>
        <begin position="1"/>
        <end position="711"/>
    </location>
</feature>
<feature type="domain" description="DRBM 1" evidence="4">
    <location>
        <begin position="78"/>
        <end position="144"/>
    </location>
</feature>
<feature type="domain" description="DRBM 2" evidence="4">
    <location>
        <begin position="231"/>
        <end position="298"/>
    </location>
</feature>
<feature type="domain" description="A to I editase" evidence="3">
    <location>
        <begin position="370"/>
        <end position="707"/>
    </location>
</feature>
<feature type="region of interest" description="Disordered" evidence="5">
    <location>
        <begin position="1"/>
        <end position="78"/>
    </location>
</feature>
<feature type="region of interest" description="Interaction with substrate RNA" evidence="1">
    <location>
        <begin position="83"/>
        <end position="88"/>
    </location>
</feature>
<feature type="region of interest" description="Interaction with substrate RNA" evidence="1">
    <location>
        <begin position="104"/>
        <end position="105"/>
    </location>
</feature>
<feature type="region of interest" description="Disordered" evidence="5">
    <location>
        <begin position="176"/>
        <end position="220"/>
    </location>
</feature>
<feature type="region of interest" description="Interaction with substrate RNA" evidence="1">
    <location>
        <begin position="237"/>
        <end position="242"/>
    </location>
</feature>
<feature type="region of interest" description="Interaction with substrate RNA" evidence="1">
    <location>
        <position position="259"/>
    </location>
</feature>
<feature type="compositionally biased region" description="Basic residues" evidence="5">
    <location>
        <begin position="63"/>
        <end position="73"/>
    </location>
</feature>
<feature type="compositionally biased region" description="Low complexity" evidence="5">
    <location>
        <begin position="192"/>
        <end position="213"/>
    </location>
</feature>
<feature type="active site" description="Proton donor" evidence="3">
    <location>
        <position position="396"/>
    </location>
</feature>
<feature type="binding site" evidence="3">
    <location>
        <position position="394"/>
    </location>
    <ligand>
        <name>Zn(2+)</name>
        <dbReference type="ChEBI" id="CHEBI:29105"/>
    </ligand>
</feature>
<feature type="binding site" evidence="2">
    <location>
        <position position="400"/>
    </location>
    <ligand>
        <name>1D-myo-inositol hexakisphosphate</name>
        <dbReference type="ChEBI" id="CHEBI:58130"/>
    </ligand>
</feature>
<feature type="binding site" evidence="2">
    <location>
        <position position="401"/>
    </location>
    <ligand>
        <name>1D-myo-inositol hexakisphosphate</name>
        <dbReference type="ChEBI" id="CHEBI:58130"/>
    </ligand>
</feature>
<feature type="binding site" evidence="3">
    <location>
        <position position="451"/>
    </location>
    <ligand>
        <name>Zn(2+)</name>
        <dbReference type="ChEBI" id="CHEBI:29105"/>
    </ligand>
</feature>
<feature type="binding site" evidence="3">
    <location>
        <position position="526"/>
    </location>
    <ligand>
        <name>Zn(2+)</name>
        <dbReference type="ChEBI" id="CHEBI:29105"/>
    </ligand>
</feature>
<feature type="binding site" evidence="2">
    <location>
        <position position="529"/>
    </location>
    <ligand>
        <name>1D-myo-inositol hexakisphosphate</name>
        <dbReference type="ChEBI" id="CHEBI:58130"/>
    </ligand>
</feature>
<feature type="binding site" evidence="2">
    <location>
        <position position="532"/>
    </location>
    <ligand>
        <name>1D-myo-inositol hexakisphosphate</name>
        <dbReference type="ChEBI" id="CHEBI:58130"/>
    </ligand>
</feature>
<feature type="binding site" evidence="2">
    <location>
        <position position="639"/>
    </location>
    <ligand>
        <name>1D-myo-inositol hexakisphosphate</name>
        <dbReference type="ChEBI" id="CHEBI:58130"/>
    </ligand>
</feature>
<feature type="binding site" evidence="2">
    <location>
        <position position="672"/>
    </location>
    <ligand>
        <name>1D-myo-inositol hexakisphosphate</name>
        <dbReference type="ChEBI" id="CHEBI:58130"/>
    </ligand>
</feature>
<feature type="binding site" evidence="2">
    <location>
        <position position="682"/>
    </location>
    <ligand>
        <name>1D-myo-inositol hexakisphosphate</name>
        <dbReference type="ChEBI" id="CHEBI:58130"/>
    </ligand>
</feature>
<feature type="binding site" evidence="2">
    <location>
        <position position="700"/>
    </location>
    <ligand>
        <name>1D-myo-inositol hexakisphosphate</name>
        <dbReference type="ChEBI" id="CHEBI:58130"/>
    </ligand>
</feature>
<feature type="modified residue" description="Phosphoserine" evidence="2">
    <location>
        <position position="149"/>
    </location>
</feature>
<feature type="splice variant" id="VSP_013709" description="In isoform 4 and isoform 5." evidence="10">
    <location>
        <begin position="1"/>
        <end position="24"/>
    </location>
</feature>
<feature type="splice variant" id="VSP_013710" description="In isoform 3." evidence="10">
    <original>MDIEDEENMS</original>
    <variation>MPLG</variation>
    <location>
        <begin position="1"/>
        <end position="10"/>
    </location>
</feature>
<feature type="splice variant" id="VSP_041423" description="In isoform 6." evidence="9">
    <original>M</original>
    <variation>MASLGLGTLTVGAFFSFVGRRYKRRRKKRSERKDKRGLRQSRSPQKCFTM</variation>
    <location>
        <position position="1"/>
    </location>
</feature>
<feature type="splice variant" id="VSP_013711" description="In isoform 2, isoform 3 and isoform 5." evidence="8 10">
    <location>
        <begin position="466"/>
        <end position="475"/>
    </location>
</feature>
<feature type="sequence conflict" description="In Ref. 2; AAK17102." evidence="11" ref="2">
    <original>Y</original>
    <variation>C</variation>
    <location>
        <position position="65"/>
    </location>
</feature>
<feature type="sequence conflict" description="In Ref. 2; AAK17102." evidence="11" ref="2">
    <original>S</original>
    <variation>G</variation>
    <location>
        <position position="559"/>
    </location>
</feature>
<feature type="helix" evidence="12">
    <location>
        <begin position="236"/>
        <end position="243"/>
    </location>
</feature>
<feature type="strand" evidence="12">
    <location>
        <begin position="248"/>
        <end position="256"/>
    </location>
</feature>
<feature type="strand" evidence="12">
    <location>
        <begin position="262"/>
        <end position="269"/>
    </location>
</feature>
<feature type="strand" evidence="12">
    <location>
        <begin position="272"/>
        <end position="280"/>
    </location>
</feature>
<feature type="helix" evidence="12">
    <location>
        <begin position="281"/>
        <end position="296"/>
    </location>
</feature>
<name>RED1_MOUSE</name>
<organism>
    <name type="scientific">Mus musculus</name>
    <name type="common">Mouse</name>
    <dbReference type="NCBI Taxonomy" id="10090"/>
    <lineage>
        <taxon>Eukaryota</taxon>
        <taxon>Metazoa</taxon>
        <taxon>Chordata</taxon>
        <taxon>Craniata</taxon>
        <taxon>Vertebrata</taxon>
        <taxon>Euteleostomi</taxon>
        <taxon>Mammalia</taxon>
        <taxon>Eutheria</taxon>
        <taxon>Euarchontoglires</taxon>
        <taxon>Glires</taxon>
        <taxon>Rodentia</taxon>
        <taxon>Myomorpha</taxon>
        <taxon>Muroidea</taxon>
        <taxon>Muridae</taxon>
        <taxon>Murinae</taxon>
        <taxon>Mus</taxon>
        <taxon>Mus</taxon>
    </lineage>
</organism>
<comment type="function">
    <text evidence="6 7">Catalyzes the hydrolytic deamination of adenosine to inosine in double-stranded RNA (dsRNA) referred to as A-to-I RNA editing. This may affect gene expression and function in a number of ways that include mRNA translation by changing codons and hence the amino acid sequence of proteins; pre-mRNA splicing by altering splice site recognition sequences; RNA stability by changing sequences involved in nuclease recognition; genetic stability in the case of RNA virus genomes by changing sequences during viral RNA replication; and RNA structure-dependent activities such as microRNA production or targeting or protein-RNA interactions. Can edit both viral and cellular RNAs and can edit RNAs at multiple sites (hyper-editing) or at specific sites (site-specific editing). Its cellular RNA substrates include: bladder cancer-associated protein (BLCAP), neurotransmitter receptors for glutamate (GRIA2 and GRIK2) and serotonin (HTR2C), GABA receptor (GABRA3) and potassium voltage-gated channel (KCNA1). Site-specific RNA editing of transcripts encoding these proteins results in amino acid substitutions which consequently alter their functional activities. Edits GRIA2 at both the Q/R and R/G sites efficiently but converts the adenosine in hotspot1 much less efficiently. Can inhibit cell proliferation and migration and can stimulate exocytosis.</text>
</comment>
<comment type="catalytic activity">
    <reaction evidence="7">
        <text>adenosine in double-stranded RNA + H2O + H(+) = inosine in double-stranded RNA + NH4(+)</text>
        <dbReference type="Rhea" id="RHEA:10120"/>
        <dbReference type="Rhea" id="RHEA-COMP:13885"/>
        <dbReference type="Rhea" id="RHEA-COMP:13886"/>
        <dbReference type="ChEBI" id="CHEBI:15377"/>
        <dbReference type="ChEBI" id="CHEBI:15378"/>
        <dbReference type="ChEBI" id="CHEBI:28938"/>
        <dbReference type="ChEBI" id="CHEBI:74411"/>
        <dbReference type="ChEBI" id="CHEBI:82852"/>
        <dbReference type="EC" id="3.5.4.37"/>
    </reaction>
</comment>
<comment type="cofactor">
    <cofactor evidence="2">
        <name>1D-myo-inositol hexakisphosphate</name>
        <dbReference type="ChEBI" id="CHEBI:58130"/>
    </cofactor>
    <text evidence="2">Binds 1 myo-inositol hexakisphosphate (IP6) per subunit.</text>
</comment>
<comment type="subunit">
    <text evidence="2">Homodimer. Homodimerization is essential for its catalytic activity. Can form heterodimers with isoform 5 of ADAR/ADAR1.</text>
</comment>
<comment type="subcellular location">
    <subcellularLocation>
        <location evidence="2">Nucleus</location>
    </subcellularLocation>
    <subcellularLocation>
        <location evidence="2">Nucleus</location>
        <location evidence="2">Nucleolus</location>
    </subcellularLocation>
    <text evidence="2">Shuttles between nucleoli and the nucleoplasm.</text>
</comment>
<comment type="alternative products">
    <event type="alternative splicing"/>
    <isoform>
        <id>Q91ZS8-1</id>
        <name>1</name>
        <sequence type="displayed"/>
    </isoform>
    <isoform>
        <id>Q91ZS8-2</id>
        <name>2</name>
        <sequence type="described" ref="VSP_013711"/>
    </isoform>
    <isoform>
        <id>Q91ZS8-3</id>
        <name>3</name>
        <sequence type="described" ref="VSP_013710 VSP_013711"/>
    </isoform>
    <isoform>
        <id>Q91ZS8-4</id>
        <name>4</name>
        <sequence type="described" ref="VSP_013709"/>
    </isoform>
    <isoform>
        <id>Q91ZS8-5</id>
        <name>5</name>
        <sequence type="described" ref="VSP_013709 VSP_013711"/>
    </isoform>
    <isoform>
        <id>Q91ZS8-6</id>
        <name>6</name>
        <sequence type="described" ref="VSP_041423"/>
    </isoform>
</comment>
<comment type="miscellaneous">
    <molecule>Isoform 6</molecule>
    <text evidence="11">Likely expressed from an alternative promoter. Contains a region highly similar to the so-called ssRNA-binding R-domain of ADARB2.</text>
</comment>
<reference key="1">
    <citation type="submission" date="2002-10" db="EMBL/GenBank/DDBJ databases">
        <title>Phylogenetic comparison of ADAR2 genes and transcripts: conservation and diversity in editing site sequence and alternative splicing patterns.</title>
        <authorList>
            <person name="Slavov D.B."/>
            <person name="Gardiner K."/>
        </authorList>
    </citation>
    <scope>NUCLEOTIDE SEQUENCE [MRNA] (ISOFORMS 1; 2; 3; 4 AND 5)</scope>
</reference>
<reference key="2">
    <citation type="journal article" date="2003" name="Immunology">
        <title>Widespread inosine-containing mRNA in lymphocytes regulated by ADAR1 in response to inflammation.</title>
        <authorList>
            <person name="Yang J.-H."/>
            <person name="Luo X."/>
            <person name="Nie Y."/>
            <person name="Su Y."/>
            <person name="Zhao Q."/>
            <person name="Kabir K."/>
            <person name="Zhang D.-X."/>
            <person name="Rabinovici R."/>
        </authorList>
    </citation>
    <scope>NUCLEOTIDE SEQUENCE [MRNA] (ISOFORM 2)</scope>
    <source>
        <strain>C57BL/6J</strain>
        <tissue>Brain</tissue>
    </source>
</reference>
<reference key="3">
    <citation type="journal article" date="2009" name="PLoS ONE">
        <title>Novel exon of mammalian ADAR2 extends open reading frame.</title>
        <authorList>
            <person name="Maas S."/>
            <person name="Gommans W.M."/>
        </authorList>
    </citation>
    <scope>NUCLEOTIDE SEQUENCE [MRNA] OF 1-75 (ISOFORM 6)</scope>
</reference>
<reference key="4">
    <citation type="journal article" date="2005" name="Science">
        <title>The transcriptional landscape of the mammalian genome.</title>
        <authorList>
            <person name="Carninci P."/>
            <person name="Kasukawa T."/>
            <person name="Katayama S."/>
            <person name="Gough J."/>
            <person name="Frith M.C."/>
            <person name="Maeda N."/>
            <person name="Oyama R."/>
            <person name="Ravasi T."/>
            <person name="Lenhard B."/>
            <person name="Wells C."/>
            <person name="Kodzius R."/>
            <person name="Shimokawa K."/>
            <person name="Bajic V.B."/>
            <person name="Brenner S.E."/>
            <person name="Batalov S."/>
            <person name="Forrest A.R."/>
            <person name="Zavolan M."/>
            <person name="Davis M.J."/>
            <person name="Wilming L.G."/>
            <person name="Aidinis V."/>
            <person name="Allen J.E."/>
            <person name="Ambesi-Impiombato A."/>
            <person name="Apweiler R."/>
            <person name="Aturaliya R.N."/>
            <person name="Bailey T.L."/>
            <person name="Bansal M."/>
            <person name="Baxter L."/>
            <person name="Beisel K.W."/>
            <person name="Bersano T."/>
            <person name="Bono H."/>
            <person name="Chalk A.M."/>
            <person name="Chiu K.P."/>
            <person name="Choudhary V."/>
            <person name="Christoffels A."/>
            <person name="Clutterbuck D.R."/>
            <person name="Crowe M.L."/>
            <person name="Dalla E."/>
            <person name="Dalrymple B.P."/>
            <person name="de Bono B."/>
            <person name="Della Gatta G."/>
            <person name="di Bernardo D."/>
            <person name="Down T."/>
            <person name="Engstrom P."/>
            <person name="Fagiolini M."/>
            <person name="Faulkner G."/>
            <person name="Fletcher C.F."/>
            <person name="Fukushima T."/>
            <person name="Furuno M."/>
            <person name="Futaki S."/>
            <person name="Gariboldi M."/>
            <person name="Georgii-Hemming P."/>
            <person name="Gingeras T.R."/>
            <person name="Gojobori T."/>
            <person name="Green R.E."/>
            <person name="Gustincich S."/>
            <person name="Harbers M."/>
            <person name="Hayashi Y."/>
            <person name="Hensch T.K."/>
            <person name="Hirokawa N."/>
            <person name="Hill D."/>
            <person name="Huminiecki L."/>
            <person name="Iacono M."/>
            <person name="Ikeo K."/>
            <person name="Iwama A."/>
            <person name="Ishikawa T."/>
            <person name="Jakt M."/>
            <person name="Kanapin A."/>
            <person name="Katoh M."/>
            <person name="Kawasawa Y."/>
            <person name="Kelso J."/>
            <person name="Kitamura H."/>
            <person name="Kitano H."/>
            <person name="Kollias G."/>
            <person name="Krishnan S.P."/>
            <person name="Kruger A."/>
            <person name="Kummerfeld S.K."/>
            <person name="Kurochkin I.V."/>
            <person name="Lareau L.F."/>
            <person name="Lazarevic D."/>
            <person name="Lipovich L."/>
            <person name="Liu J."/>
            <person name="Liuni S."/>
            <person name="McWilliam S."/>
            <person name="Madan Babu M."/>
            <person name="Madera M."/>
            <person name="Marchionni L."/>
            <person name="Matsuda H."/>
            <person name="Matsuzawa S."/>
            <person name="Miki H."/>
            <person name="Mignone F."/>
            <person name="Miyake S."/>
            <person name="Morris K."/>
            <person name="Mottagui-Tabar S."/>
            <person name="Mulder N."/>
            <person name="Nakano N."/>
            <person name="Nakauchi H."/>
            <person name="Ng P."/>
            <person name="Nilsson R."/>
            <person name="Nishiguchi S."/>
            <person name="Nishikawa S."/>
            <person name="Nori F."/>
            <person name="Ohara O."/>
            <person name="Okazaki Y."/>
            <person name="Orlando V."/>
            <person name="Pang K.C."/>
            <person name="Pavan W.J."/>
            <person name="Pavesi G."/>
            <person name="Pesole G."/>
            <person name="Petrovsky N."/>
            <person name="Piazza S."/>
            <person name="Reed J."/>
            <person name="Reid J.F."/>
            <person name="Ring B.Z."/>
            <person name="Ringwald M."/>
            <person name="Rost B."/>
            <person name="Ruan Y."/>
            <person name="Salzberg S.L."/>
            <person name="Sandelin A."/>
            <person name="Schneider C."/>
            <person name="Schoenbach C."/>
            <person name="Sekiguchi K."/>
            <person name="Semple C.A."/>
            <person name="Seno S."/>
            <person name="Sessa L."/>
            <person name="Sheng Y."/>
            <person name="Shibata Y."/>
            <person name="Shimada H."/>
            <person name="Shimada K."/>
            <person name="Silva D."/>
            <person name="Sinclair B."/>
            <person name="Sperling S."/>
            <person name="Stupka E."/>
            <person name="Sugiura K."/>
            <person name="Sultana R."/>
            <person name="Takenaka Y."/>
            <person name="Taki K."/>
            <person name="Tammoja K."/>
            <person name="Tan S.L."/>
            <person name="Tang S."/>
            <person name="Taylor M.S."/>
            <person name="Tegner J."/>
            <person name="Teichmann S.A."/>
            <person name="Ueda H.R."/>
            <person name="van Nimwegen E."/>
            <person name="Verardo R."/>
            <person name="Wei C.L."/>
            <person name="Yagi K."/>
            <person name="Yamanishi H."/>
            <person name="Zabarovsky E."/>
            <person name="Zhu S."/>
            <person name="Zimmer A."/>
            <person name="Hide W."/>
            <person name="Bult C."/>
            <person name="Grimmond S.M."/>
            <person name="Teasdale R.D."/>
            <person name="Liu E.T."/>
            <person name="Brusic V."/>
            <person name="Quackenbush J."/>
            <person name="Wahlestedt C."/>
            <person name="Mattick J.S."/>
            <person name="Hume D.A."/>
            <person name="Kai C."/>
            <person name="Sasaki D."/>
            <person name="Tomaru Y."/>
            <person name="Fukuda S."/>
            <person name="Kanamori-Katayama M."/>
            <person name="Suzuki M."/>
            <person name="Aoki J."/>
            <person name="Arakawa T."/>
            <person name="Iida J."/>
            <person name="Imamura K."/>
            <person name="Itoh M."/>
            <person name="Kato T."/>
            <person name="Kawaji H."/>
            <person name="Kawagashira N."/>
            <person name="Kawashima T."/>
            <person name="Kojima M."/>
            <person name="Kondo S."/>
            <person name="Konno H."/>
            <person name="Nakano K."/>
            <person name="Ninomiya N."/>
            <person name="Nishio T."/>
            <person name="Okada M."/>
            <person name="Plessy C."/>
            <person name="Shibata K."/>
            <person name="Shiraki T."/>
            <person name="Suzuki S."/>
            <person name="Tagami M."/>
            <person name="Waki K."/>
            <person name="Watahiki A."/>
            <person name="Okamura-Oho Y."/>
            <person name="Suzuki H."/>
            <person name="Kawai J."/>
            <person name="Hayashizaki Y."/>
        </authorList>
    </citation>
    <scope>NUCLEOTIDE SEQUENCE [LARGE SCALE MRNA]</scope>
    <source>
        <strain>C57BL/6J</strain>
        <tissue>Embryo</tissue>
    </source>
</reference>
<reference key="5">
    <citation type="submission" date="2005-09" db="EMBL/GenBank/DDBJ databases">
        <authorList>
            <person name="Mural R.J."/>
            <person name="Adams M.D."/>
            <person name="Myers E.W."/>
            <person name="Smith H.O."/>
            <person name="Venter J.C."/>
        </authorList>
    </citation>
    <scope>NUCLEOTIDE SEQUENCE [LARGE SCALE GENOMIC DNA]</scope>
</reference>
<reference key="6">
    <citation type="journal article" date="2007" name="RNA">
        <title>Editing modifies the GABA(A) receptor subunit alpha3.</title>
        <authorList>
            <person name="Ohlson J."/>
            <person name="Pedersen J.S."/>
            <person name="Haussler D."/>
            <person name="Ohman M."/>
        </authorList>
    </citation>
    <scope>FUNCTION</scope>
</reference>
<reference key="7">
    <citation type="journal article" date="2020" name="J. Biol. Chem.">
        <title>Distant coupling between RNA editing and alternative splicing of the osmosensitive cation channel Tmem63b.</title>
        <authorList>
            <person name="Wu D."/>
            <person name="Zang Y.Y."/>
            <person name="Shi Y.Y."/>
            <person name="Ye C."/>
            <person name="Cai W.M."/>
            <person name="Tang X.H."/>
            <person name="Zhao L."/>
            <person name="Liu Y."/>
            <person name="Gan Z."/>
            <person name="Chen G.Q."/>
            <person name="Xu Y."/>
            <person name="Yang J.J."/>
            <person name="Shi Y.S."/>
        </authorList>
    </citation>
    <scope>FUNCTION</scope>
    <scope>CATALYTIC ACTIVITY</scope>
</reference>
<reference key="8">
    <citation type="journal article" date="2011" name="J. Interferon Cytokine Res.">
        <title>Adenosine deaminases acting on RNA, RNA editing, and interferon action.</title>
        <authorList>
            <person name="George C.X."/>
            <person name="Gan Z."/>
            <person name="Liu Y."/>
            <person name="Samuel C.E."/>
        </authorList>
    </citation>
    <scope>REVIEW</scope>
</reference>
<reference key="9">
    <citation type="journal article" date="2010" name="Cell">
        <title>The solution structure of the ADAR2 dsRBM-RNA complex reveals a sequence-specific readout of the minor groove.</title>
        <authorList>
            <person name="Stefl R."/>
            <person name="Oberstrass F.C."/>
            <person name="Hood J.L."/>
            <person name="Jourdan M."/>
            <person name="Zimmermann M."/>
            <person name="Skrisovska L."/>
            <person name="Maris C."/>
            <person name="Peng L."/>
            <person name="Hofr C."/>
            <person name="Emeson R.B."/>
            <person name="Allain F.H."/>
        </authorList>
    </citation>
    <scope>STRUCTURE BY NMR OF 231-301 IN COMPLEX WITH RNA</scope>
</reference>
<sequence length="711" mass="78001">MDIEDEENMSSSSTDIKENRNLDNMPPKDSSTPGPGEGIPLSNGGGGSTSRKRPLEEGSNGHSKYRLKKRRKTPGPVLPKNALMQLNEIKPGLQYMLLSQTGPVHAPLFVMSVEVNGQVFEGSGPTKKKAKLHAAEKALRSFVQFPNASEAHLAMGRTLSVNTDFTSDQADFPDTLFNGFETPDKSEPPFYVGSNGDDSFSSSGDVSLSASPVPASLTQPPLPIPPPFPPPSGKNPVMILNELRPGLKYDFLSESGESHAKSFVMSVVVDGQFFEGSGRNKKLAKARAAQSALATVFNLHLDQTPSRQPVLSEGLQLHLPQVLADAVSRLVLGKFSDLTDNFSSPHARRKVLSGVVMTTGTDVKDAKVISVSTGTKCINGEYMSDRGLALNDCHAEIISRRSLLRFLYAQLELYLNNKEDQKKSIFQKSERGGFRLKDTVQFHLYISTSPCGDARIFSPHEPVLEGMTPDSHQLTEPADRHPNRKARGQLRTKIESGEGTIPVRSNASIQTWDGVLQGERLLTMSCSDKIARWNVVGIQGSLLSIFVEPIYFSSIILGSLYHGDHLSRAMYQRISNIEDLPPLYTLNKPLLSGISNAEARQPGKAPNFSVNWTVGDATIEVINATTGKDELGRPSRLCKHALYCRWMRVHGKVPPHLLRTKITKPTTYHESKLAAREYQAAKARLFTAFIKAGLGAWVEKPTEQDQFSFTP</sequence>
<keyword id="KW-0002">3D-structure</keyword>
<keyword id="KW-0025">Alternative splicing</keyword>
<keyword id="KW-0378">Hydrolase</keyword>
<keyword id="KW-0479">Metal-binding</keyword>
<keyword id="KW-0507">mRNA processing</keyword>
<keyword id="KW-0539">Nucleus</keyword>
<keyword id="KW-0597">Phosphoprotein</keyword>
<keyword id="KW-1185">Reference proteome</keyword>
<keyword id="KW-0677">Repeat</keyword>
<keyword id="KW-0694">RNA-binding</keyword>
<keyword id="KW-0862">Zinc</keyword>
<proteinExistence type="evidence at protein level"/>
<gene>
    <name type="primary">Adarb1</name>
    <name type="synonym">Adar2</name>
    <name type="synonym">Red1</name>
</gene>
<protein>
    <recommendedName>
        <fullName>Double-stranded RNA-specific editase 1</fullName>
        <ecNumber evidence="7">3.5.4.37</ecNumber>
    </recommendedName>
    <alternativeName>
        <fullName>RNA-editing deaminase 1</fullName>
    </alternativeName>
    <alternativeName>
        <fullName>RNA-editing enzyme 1</fullName>
    </alternativeName>
    <alternativeName>
        <fullName>dsRNA adenosine deaminase</fullName>
    </alternativeName>
</protein>